<reference key="1">
    <citation type="submission" date="2007-06" db="EMBL/GenBank/DDBJ databases">
        <title>Complete sequence of Methanococcus vannielii SB.</title>
        <authorList>
            <consortium name="US DOE Joint Genome Institute"/>
            <person name="Copeland A."/>
            <person name="Lucas S."/>
            <person name="Lapidus A."/>
            <person name="Barry K."/>
            <person name="Glavina del Rio T."/>
            <person name="Dalin E."/>
            <person name="Tice H."/>
            <person name="Pitluck S."/>
            <person name="Chain P."/>
            <person name="Malfatti S."/>
            <person name="Shin M."/>
            <person name="Vergez L."/>
            <person name="Schmutz J."/>
            <person name="Larimer F."/>
            <person name="Land M."/>
            <person name="Hauser L."/>
            <person name="Kyrpides N."/>
            <person name="Anderson I."/>
            <person name="Sieprawska-Lupa M."/>
            <person name="Whitman W.B."/>
            <person name="Richardson P."/>
        </authorList>
    </citation>
    <scope>NUCLEOTIDE SEQUENCE [LARGE SCALE GENOMIC DNA]</scope>
    <source>
        <strain>ATCC 35089 / DSM 1224 / JCM 13029 / OCM 148 / SB</strain>
    </source>
</reference>
<name>MTRH_METVS</name>
<comment type="function">
    <text evidence="1">Part of a complex that catalyzes the formation of methyl-coenzyme M and tetrahydromethanopterin from coenzyme M and methyl-tetrahydromethanopterin. This is an energy-conserving, sodium-ion translocating step. MtrH catalyzes the transfer of the methyl group from methyl-tetrahydromethanopterin to the corrinoid prosthetic group of MtrA.</text>
</comment>
<comment type="catalytic activity">
    <reaction evidence="1">
        <text>5-methyl-5,6,7,8-tetrahydromethanopterin + coenzyme M + 2 Na(+)(in) = 5,6,7,8-tetrahydromethanopterin + methyl-coenzyme M + 2 Na(+)(out)</text>
        <dbReference type="Rhea" id="RHEA:53492"/>
        <dbReference type="ChEBI" id="CHEBI:29101"/>
        <dbReference type="ChEBI" id="CHEBI:58103"/>
        <dbReference type="ChEBI" id="CHEBI:58116"/>
        <dbReference type="ChEBI" id="CHEBI:58286"/>
        <dbReference type="ChEBI" id="CHEBI:58319"/>
        <dbReference type="EC" id="7.2.1.4"/>
    </reaction>
</comment>
<comment type="pathway">
    <text evidence="1">One-carbon metabolism; methanogenesis from CO(2); methyl-coenzyme M from 5,10-methylene-5,6,7,8-tetrahydromethanopterin: step 2/2.</text>
</comment>
<comment type="subunit">
    <text evidence="1">The complex is composed of 8 subunits; MtrA, MtrB, MtrC, MtrD, MtrE, MtrF, MtrG and MtrH.</text>
</comment>
<comment type="similarity">
    <text evidence="1">Belongs to the MtrH family.</text>
</comment>
<evidence type="ECO:0000255" key="1">
    <source>
        <dbReference type="HAMAP-Rule" id="MF_01501"/>
    </source>
</evidence>
<proteinExistence type="inferred from homology"/>
<keyword id="KW-0484">Methanogenesis</keyword>
<keyword id="KW-0489">Methyltransferase</keyword>
<keyword id="KW-0554">One-carbon metabolism</keyword>
<keyword id="KW-0808">Transferase</keyword>
<keyword id="KW-1278">Translocase</keyword>
<feature type="chain" id="PRO_1000024473" description="Tetrahydromethanopterin S-methyltransferase subunit H">
    <location>
        <begin position="1"/>
        <end position="319"/>
    </location>
</feature>
<gene>
    <name evidence="1" type="primary">mtrH</name>
    <name type="ordered locus">Mevan_0880</name>
</gene>
<protein>
    <recommendedName>
        <fullName evidence="1">Tetrahydromethanopterin S-methyltransferase subunit H</fullName>
        <ecNumber evidence="1">7.2.1.4</ecNumber>
    </recommendedName>
    <alternativeName>
        <fullName evidence="1">N5-methyltetrahydromethanopterin--coenzyme M methyltransferase subunit H</fullName>
    </alternativeName>
</protein>
<dbReference type="EC" id="7.2.1.4" evidence="1"/>
<dbReference type="EMBL" id="CP000742">
    <property type="protein sequence ID" value="ABR54785.1"/>
    <property type="molecule type" value="Genomic_DNA"/>
</dbReference>
<dbReference type="RefSeq" id="WP_011972686.1">
    <property type="nucleotide sequence ID" value="NC_009634.1"/>
</dbReference>
<dbReference type="SMR" id="A6UQL3"/>
<dbReference type="STRING" id="406327.Mevan_0880"/>
<dbReference type="GeneID" id="5326203"/>
<dbReference type="KEGG" id="mvn:Mevan_0880"/>
<dbReference type="eggNOG" id="arCOG04336">
    <property type="taxonomic scope" value="Archaea"/>
</dbReference>
<dbReference type="HOGENOM" id="CLU_048697_0_0_2"/>
<dbReference type="OrthoDB" id="18811at2157"/>
<dbReference type="UniPathway" id="UPA00640">
    <property type="reaction ID" value="UER00698"/>
</dbReference>
<dbReference type="Proteomes" id="UP000001107">
    <property type="component" value="Chromosome"/>
</dbReference>
<dbReference type="GO" id="GO:0030269">
    <property type="term" value="F:tetrahydromethanopterin S-methyltransferase activity"/>
    <property type="evidence" value="ECO:0007669"/>
    <property type="project" value="UniProtKB-UniRule"/>
</dbReference>
<dbReference type="GO" id="GO:0019386">
    <property type="term" value="P:methanogenesis, from carbon dioxide"/>
    <property type="evidence" value="ECO:0007669"/>
    <property type="project" value="UniProtKB-UniRule"/>
</dbReference>
<dbReference type="GO" id="GO:0032259">
    <property type="term" value="P:methylation"/>
    <property type="evidence" value="ECO:0007669"/>
    <property type="project" value="UniProtKB-KW"/>
</dbReference>
<dbReference type="GO" id="GO:0006730">
    <property type="term" value="P:one-carbon metabolic process"/>
    <property type="evidence" value="ECO:0007669"/>
    <property type="project" value="UniProtKB-UniRule"/>
</dbReference>
<dbReference type="Gene3D" id="3.20.20.20">
    <property type="entry name" value="Dihydropteroate synthase-like"/>
    <property type="match status" value="1"/>
</dbReference>
<dbReference type="HAMAP" id="MF_01501">
    <property type="entry name" value="MtrH"/>
    <property type="match status" value="1"/>
</dbReference>
<dbReference type="InterPro" id="IPR011005">
    <property type="entry name" value="Dihydropteroate_synth-like_sf"/>
</dbReference>
<dbReference type="InterPro" id="IPR023467">
    <property type="entry name" value="MeTrfase_MtrH/MtxH"/>
</dbReference>
<dbReference type="InterPro" id="IPR028342">
    <property type="entry name" value="MtrH"/>
</dbReference>
<dbReference type="NCBIfam" id="TIGR01114">
    <property type="entry name" value="mtrH"/>
    <property type="match status" value="1"/>
</dbReference>
<dbReference type="Pfam" id="PF02007">
    <property type="entry name" value="MtrH"/>
    <property type="match status" value="1"/>
</dbReference>
<dbReference type="PIRSF" id="PIRSF500206">
    <property type="entry name" value="MtrH"/>
    <property type="match status" value="1"/>
</dbReference>
<dbReference type="PIRSF" id="PIRSF004960">
    <property type="entry name" value="MtrH_MtxH"/>
    <property type="match status" value="1"/>
</dbReference>
<dbReference type="SUPFAM" id="SSF51717">
    <property type="entry name" value="Dihydropteroate synthetase-like"/>
    <property type="match status" value="1"/>
</dbReference>
<sequence length="319" mass="34222">MFRFDKEQMVIDFAGAKFGGQPGEYPTALSGTIFYARHKIVEDAKKGIFDKKAAEALINKQAEMQDITGNSALVQVFGGTEEALVNYIDFVSEVWEGPMLLDSTSGKARMAAAKRATEAGYAKQCIYNSINVSIDEEEFQSLAESDVEASIVLCFDPMDPSVEGKLNVLNNGGKTKDVGMLDLAEKAGIKYPLIDVAVTPMGAGAGNAVRASFAVKAKLGLAVGSGIHNVPSAWDWLREFRKGLREEGKEQIAKDVHHVCDIGANIVQTMASGDFVLYGPIDNAELAFPAVAMTDMIIAETAKELGTTPAAVHPLNKLI</sequence>
<accession>A6UQL3</accession>
<organism>
    <name type="scientific">Methanococcus vannielii (strain ATCC 35089 / DSM 1224 / JCM 13029 / OCM 148 / SB)</name>
    <dbReference type="NCBI Taxonomy" id="406327"/>
    <lineage>
        <taxon>Archaea</taxon>
        <taxon>Methanobacteriati</taxon>
        <taxon>Methanobacteriota</taxon>
        <taxon>Methanomada group</taxon>
        <taxon>Methanococci</taxon>
        <taxon>Methanococcales</taxon>
        <taxon>Methanococcaceae</taxon>
        <taxon>Methanococcus</taxon>
    </lineage>
</organism>